<accession>O30620</accession>
<accession>A0A1R3Y0C8</accession>
<accession>X2BJF2</accession>
<dbReference type="EMBL" id="AF013569">
    <property type="protein sequence ID" value="AAB71842.1"/>
    <property type="molecule type" value="Genomic_DNA"/>
</dbReference>
<dbReference type="EMBL" id="LT708304">
    <property type="protein sequence ID" value="SIU00495.1"/>
    <property type="molecule type" value="Genomic_DNA"/>
</dbReference>
<dbReference type="RefSeq" id="NP_855543.1">
    <property type="nucleotide sequence ID" value="NC_002945.3"/>
</dbReference>
<dbReference type="RefSeq" id="WP_003409337.1">
    <property type="nucleotide sequence ID" value="NC_002945.4"/>
</dbReference>
<dbReference type="SMR" id="O30620"/>
<dbReference type="GlyCosmos" id="O30620">
    <property type="glycosylation" value="4 sites, No reported glycans"/>
</dbReference>
<dbReference type="GeneID" id="45425833"/>
<dbReference type="KEGG" id="mbo:BQ2027_MB1891"/>
<dbReference type="PATRIC" id="fig|233413.5.peg.2072"/>
<dbReference type="Proteomes" id="UP000001419">
    <property type="component" value="Chromosome"/>
</dbReference>
<dbReference type="GO" id="GO:0005576">
    <property type="term" value="C:extracellular region"/>
    <property type="evidence" value="ECO:0007669"/>
    <property type="project" value="UniProtKB-SubCell"/>
</dbReference>
<dbReference type="GO" id="GO:0050840">
    <property type="term" value="F:extracellular matrix binding"/>
    <property type="evidence" value="ECO:0007669"/>
    <property type="project" value="InterPro"/>
</dbReference>
<dbReference type="InterPro" id="IPR010801">
    <property type="entry name" value="FAP"/>
</dbReference>
<dbReference type="Pfam" id="PF07174">
    <property type="entry name" value="FAP"/>
    <property type="match status" value="1"/>
</dbReference>
<keyword id="KW-0325">Glycoprotein</keyword>
<keyword id="KW-1185">Reference proteome</keyword>
<keyword id="KW-0677">Repeat</keyword>
<keyword id="KW-0964">Secreted</keyword>
<keyword id="KW-0732">Signal</keyword>
<name>APA_MYCBO</name>
<reference key="1">
    <citation type="submission" date="1997-07" db="EMBL/GenBank/DDBJ databases">
        <title>Identification, sequence and characterization of the M. bovis BCG fibronectin attachment protein.</title>
        <authorList>
            <person name="Zhao W."/>
            <person name="Schorey J.S."/>
            <person name="Bong-Mastek M."/>
            <person name="Brown E.J."/>
            <person name="Ratliff T.L."/>
        </authorList>
    </citation>
    <scope>NUCLEOTIDE SEQUENCE [GENOMIC DNA]</scope>
    <source>
        <strain>BCG</strain>
    </source>
</reference>
<reference key="2">
    <citation type="journal article" date="2003" name="Proc. Natl. Acad. Sci. U.S.A.">
        <title>The complete genome sequence of Mycobacterium bovis.</title>
        <authorList>
            <person name="Garnier T."/>
            <person name="Eiglmeier K."/>
            <person name="Camus J.-C."/>
            <person name="Medina N."/>
            <person name="Mansoor H."/>
            <person name="Pryor M."/>
            <person name="Duthoy S."/>
            <person name="Grondin S."/>
            <person name="Lacroix C."/>
            <person name="Monsempe C."/>
            <person name="Simon S."/>
            <person name="Harris B."/>
            <person name="Atkin R."/>
            <person name="Doggett J."/>
            <person name="Mayes R."/>
            <person name="Keating L."/>
            <person name="Wheeler P.R."/>
            <person name="Parkhill J."/>
            <person name="Barrell B.G."/>
            <person name="Cole S.T."/>
            <person name="Gordon S.V."/>
            <person name="Hewinson R.G."/>
        </authorList>
    </citation>
    <scope>NUCLEOTIDE SEQUENCE [LARGE SCALE GENOMIC DNA]</scope>
    <source>
        <strain>ATCC BAA-935 / AF2122/97</strain>
    </source>
</reference>
<reference key="3">
    <citation type="journal article" date="2017" name="Genome Announc.">
        <title>Updated reference genome sequence and annotation of Mycobacterium bovis AF2122/97.</title>
        <authorList>
            <person name="Malone K.M."/>
            <person name="Farrell D."/>
            <person name="Stuber T.P."/>
            <person name="Schubert O.T."/>
            <person name="Aebersold R."/>
            <person name="Robbe-Austerman S."/>
            <person name="Gordon S.V."/>
        </authorList>
    </citation>
    <scope>NUCLEOTIDE SEQUENCE [LARGE SCALE GENOMIC DNA]</scope>
    <scope>GENOME REANNOTATION</scope>
    <source>
        <strain>ATCC BAA-935 / AF2122/97</strain>
    </source>
</reference>
<sequence>MHQVDPNLTRRKGRLAALAIAAMASASLVTVAVPATANADPEPAPPVPTTAASPPSTAAAPPAPATPVAPPPPAAANTPNAQPGDPNAAPPPADPNAPPPPVIAPNAPQPVRIDNPVGGFSFALPAGWVESDAAHLDYGSALLSKTTGDPPFPGQPPPVANDTRIVLGRLDQKLYASAEATDSKAAARLGSDMGEFYMPYPGTRINQETVSLDANGVSGSASYYEVKFSDPSKPNGQIWTGVIGSPAANAPDAGPPQRWFVVWLGTANNPVDKGAAKALAESIRPLVAPPPAPAPAPAEPAPAPAPAGEVAPTPTTPTPQRTLPA</sequence>
<feature type="signal peptide" evidence="1">
    <location>
        <begin position="1"/>
        <end position="39"/>
    </location>
</feature>
<feature type="chain" id="PRO_0000020743" description="Alanine and proline-rich secreted protein Apa">
    <location>
        <begin position="40"/>
        <end position="325"/>
    </location>
</feature>
<feature type="repeat" description="1">
    <location>
        <begin position="85"/>
        <end position="88"/>
    </location>
</feature>
<feature type="repeat" description="2">
    <location>
        <begin position="94"/>
        <end position="97"/>
    </location>
</feature>
<feature type="repeat" description="3">
    <location>
        <begin position="104"/>
        <end position="107"/>
    </location>
</feature>
<feature type="region of interest" description="Disordered" evidence="2">
    <location>
        <begin position="38"/>
        <end position="110"/>
    </location>
</feature>
<feature type="region of interest" description="3 X 4 AA approximate repeats of [DA]-P-N-A">
    <location>
        <begin position="85"/>
        <end position="107"/>
    </location>
</feature>
<feature type="region of interest" description="Disordered" evidence="2">
    <location>
        <begin position="286"/>
        <end position="325"/>
    </location>
</feature>
<feature type="compositionally biased region" description="Low complexity" evidence="2">
    <location>
        <begin position="49"/>
        <end position="60"/>
    </location>
</feature>
<feature type="compositionally biased region" description="Pro residues" evidence="2">
    <location>
        <begin position="61"/>
        <end position="74"/>
    </location>
</feature>
<feature type="compositionally biased region" description="Low complexity" evidence="2">
    <location>
        <begin position="75"/>
        <end position="87"/>
    </location>
</feature>
<feature type="compositionally biased region" description="Pro residues" evidence="2">
    <location>
        <begin position="88"/>
        <end position="103"/>
    </location>
</feature>
<feature type="compositionally biased region" description="Pro residues" evidence="2">
    <location>
        <begin position="287"/>
        <end position="305"/>
    </location>
</feature>
<feature type="compositionally biased region" description="Low complexity" evidence="2">
    <location>
        <begin position="306"/>
        <end position="325"/>
    </location>
</feature>
<feature type="glycosylation site" description="O-linked (Man...) threonine" evidence="1">
    <location>
        <position position="49"/>
    </location>
</feature>
<feature type="glycosylation site" description="O-linked (Man...) threonine" evidence="1">
    <location>
        <position position="57"/>
    </location>
</feature>
<feature type="glycosylation site" description="O-linked (Man) threonine" evidence="1">
    <location>
        <position position="66"/>
    </location>
</feature>
<feature type="glycosylation site" description="O-linked (Man...) threonine" evidence="1">
    <location>
        <position position="316"/>
    </location>
</feature>
<organism>
    <name type="scientific">Mycobacterium bovis (strain ATCC BAA-935 / AF2122/97)</name>
    <dbReference type="NCBI Taxonomy" id="233413"/>
    <lineage>
        <taxon>Bacteria</taxon>
        <taxon>Bacillati</taxon>
        <taxon>Actinomycetota</taxon>
        <taxon>Actinomycetes</taxon>
        <taxon>Mycobacteriales</taxon>
        <taxon>Mycobacteriaceae</taxon>
        <taxon>Mycobacterium</taxon>
        <taxon>Mycobacterium tuberculosis complex</taxon>
    </lineage>
</organism>
<protein>
    <recommendedName>
        <fullName>Alanine and proline-rich secreted protein Apa</fullName>
    </recommendedName>
    <alternativeName>
        <fullName>45/47 kDa antigen</fullName>
    </alternativeName>
    <alternativeName>
        <fullName>FAP-B</fullName>
    </alternativeName>
    <alternativeName>
        <fullName>Fibronectin attachment protein</fullName>
    </alternativeName>
</protein>
<evidence type="ECO:0000250" key="1"/>
<evidence type="ECO:0000256" key="2">
    <source>
        <dbReference type="SAM" id="MobiDB-lite"/>
    </source>
</evidence>
<evidence type="ECO:0000305" key="3"/>
<comment type="subcellular location">
    <subcellularLocation>
        <location>Secreted</location>
    </subcellularLocation>
</comment>
<comment type="similarity">
    <text evidence="3">Belongs to the Apa family.</text>
</comment>
<proteinExistence type="inferred from homology"/>
<gene>
    <name type="primary">apa</name>
    <name type="ordered locus">BQ2027_MB1891</name>
</gene>